<gene>
    <name evidence="1" type="primary">gltX</name>
    <name type="ordered locus">MG462</name>
</gene>
<proteinExistence type="inferred from homology"/>
<comment type="function">
    <text evidence="1">Catalyzes the attachment of glutamate to tRNA(Glu) in a two-step reaction: glutamate is first activated by ATP to form Glu-AMP and then transferred to the acceptor end of tRNA(Glu).</text>
</comment>
<comment type="catalytic activity">
    <reaction evidence="1">
        <text>tRNA(Glu) + L-glutamate + ATP = L-glutamyl-tRNA(Glu) + AMP + diphosphate</text>
        <dbReference type="Rhea" id="RHEA:23540"/>
        <dbReference type="Rhea" id="RHEA-COMP:9663"/>
        <dbReference type="Rhea" id="RHEA-COMP:9680"/>
        <dbReference type="ChEBI" id="CHEBI:29985"/>
        <dbReference type="ChEBI" id="CHEBI:30616"/>
        <dbReference type="ChEBI" id="CHEBI:33019"/>
        <dbReference type="ChEBI" id="CHEBI:78442"/>
        <dbReference type="ChEBI" id="CHEBI:78520"/>
        <dbReference type="ChEBI" id="CHEBI:456215"/>
        <dbReference type="EC" id="6.1.1.17"/>
    </reaction>
</comment>
<comment type="subunit">
    <text evidence="1">Monomer.</text>
</comment>
<comment type="subcellular location">
    <subcellularLocation>
        <location evidence="1">Cytoplasm</location>
    </subcellularLocation>
</comment>
<comment type="similarity">
    <text evidence="1">Belongs to the class-I aminoacyl-tRNA synthetase family. Glutamate--tRNA ligase type 1 subfamily.</text>
</comment>
<accession>P47700</accession>
<accession>Q49256</accession>
<accession>Q49306</accession>
<accession>Q49490</accession>
<protein>
    <recommendedName>
        <fullName evidence="1">Glutamate--tRNA ligase</fullName>
        <ecNumber evidence="1">6.1.1.17</ecNumber>
    </recommendedName>
    <alternativeName>
        <fullName evidence="1">Glutamyl-tRNA synthetase</fullName>
        <shortName evidence="1">GluRS</shortName>
    </alternativeName>
</protein>
<reference key="1">
    <citation type="journal article" date="1995" name="Science">
        <title>The minimal gene complement of Mycoplasma genitalium.</title>
        <authorList>
            <person name="Fraser C.M."/>
            <person name="Gocayne J.D."/>
            <person name="White O."/>
            <person name="Adams M.D."/>
            <person name="Clayton R.A."/>
            <person name="Fleischmann R.D."/>
            <person name="Bult C.J."/>
            <person name="Kerlavage A.R."/>
            <person name="Sutton G.G."/>
            <person name="Kelley J.M."/>
            <person name="Fritchman J.L."/>
            <person name="Weidman J.F."/>
            <person name="Small K.V."/>
            <person name="Sandusky M."/>
            <person name="Fuhrmann J.L."/>
            <person name="Nguyen D.T."/>
            <person name="Utterback T.R."/>
            <person name="Saudek D.M."/>
            <person name="Phillips C.A."/>
            <person name="Merrick J.M."/>
            <person name="Tomb J.-F."/>
            <person name="Dougherty B.A."/>
            <person name="Bott K.F."/>
            <person name="Hu P.-C."/>
            <person name="Lucier T.S."/>
            <person name="Peterson S.N."/>
            <person name="Smith H.O."/>
            <person name="Hutchison C.A. III"/>
            <person name="Venter J.C."/>
        </authorList>
    </citation>
    <scope>NUCLEOTIDE SEQUENCE [LARGE SCALE GENOMIC DNA]</scope>
    <source>
        <strain>ATCC 33530 / DSM 19775 / NCTC 10195 / G37</strain>
    </source>
</reference>
<reference key="2">
    <citation type="journal article" date="1991" name="Nucleic Acids Res.">
        <title>A random sequencing approach for placing markers on the physical map of Mycoplasma genitalium.</title>
        <authorList>
            <person name="Peterson S.N."/>
            <person name="Schramm N."/>
            <person name="Hu P.-C."/>
            <person name="Bott K.F."/>
            <person name="Hutchison C.A. III"/>
        </authorList>
    </citation>
    <scope>NUCLEOTIDE SEQUENCE [GENOMIC DNA] OF 188-236</scope>
    <source>
        <strain>ATCC 33530 / DSM 19775 / NCTC 10195 / G37</strain>
    </source>
</reference>
<reference key="3">
    <citation type="journal article" date="1993" name="J. Bacteriol.">
        <title>A survey of the Mycoplasma genitalium genome by using random sequencing.</title>
        <authorList>
            <person name="Peterson S.N."/>
            <person name="Hu P.-C."/>
            <person name="Bott K.F."/>
            <person name="Hutchison C.A. III"/>
        </authorList>
    </citation>
    <scope>NUCLEOTIDE SEQUENCE [GENOMIC DNA] OF 29-151 AND 362-484</scope>
    <source>
        <strain>ATCC 33530 / DSM 19775 / NCTC 10195 / G37</strain>
    </source>
</reference>
<keyword id="KW-0030">Aminoacyl-tRNA synthetase</keyword>
<keyword id="KW-0067">ATP-binding</keyword>
<keyword id="KW-0963">Cytoplasm</keyword>
<keyword id="KW-0436">Ligase</keyword>
<keyword id="KW-0547">Nucleotide-binding</keyword>
<keyword id="KW-0648">Protein biosynthesis</keyword>
<keyword id="KW-1185">Reference proteome</keyword>
<organism>
    <name type="scientific">Mycoplasma genitalium (strain ATCC 33530 / DSM 19775 / NCTC 10195 / G37)</name>
    <name type="common">Mycoplasmoides genitalium</name>
    <dbReference type="NCBI Taxonomy" id="243273"/>
    <lineage>
        <taxon>Bacteria</taxon>
        <taxon>Bacillati</taxon>
        <taxon>Mycoplasmatota</taxon>
        <taxon>Mycoplasmoidales</taxon>
        <taxon>Mycoplasmoidaceae</taxon>
        <taxon>Mycoplasmoides</taxon>
    </lineage>
</organism>
<sequence length="484" mass="55941">MEKIRTRYAPSPTGYLHVGGTRTAIFNFLLAKHFNGEFIIRIEDTDTERNIKEGINSQFDNLRWLGVIADESVYNPGNYGPYLQSQKLAVYKKLAFDLIEKNLAYRCFCSKEKLESDRKQAINNHKTPKYLGHCRNLHSKKITNHLEKNDPFTIRLKINNEAEYSWNDLVRGQITIPGSALTDIVILKANGVATYNFAVVIDDYDMEITDVLRGAEHISNTAYQLAIYQALGFKRIPRFGHLSVIVDESGKKLSKRDEKTTQFIEQFKQQGYLPEALLNFLALLGWHPQYNQEFFNLKQLIENFSLSRVVSAPAFFDIKKLQWINANYIKQLTDNAYFNFIDNYLDVKVDYLKDKNREISLLFKNQITHGVQINELIRESFATKIGVENLAKKSHILFKNIKLFLEQLAKSLQGLEEWKAEQIKTTINKVGAVFNLKGKQLFMPIRLIFTNKEHGPDLAHIIEIFDKESAINLIKQFINATNLF</sequence>
<dbReference type="EC" id="6.1.1.17" evidence="1"/>
<dbReference type="EMBL" id="L43967">
    <property type="protein sequence ID" value="AAC72482.1"/>
    <property type="molecule type" value="Genomic_DNA"/>
</dbReference>
<dbReference type="EMBL" id="X61538">
    <property type="protein sequence ID" value="CAA43750.1"/>
    <property type="molecule type" value="Genomic_DNA"/>
</dbReference>
<dbReference type="EMBL" id="U02183">
    <property type="protein sequence ID" value="AAD12469.1"/>
    <property type="molecule type" value="Genomic_DNA"/>
</dbReference>
<dbReference type="EMBL" id="U02122">
    <property type="protein sequence ID" value="AAD12397.1"/>
    <property type="molecule type" value="Genomic_DNA"/>
</dbReference>
<dbReference type="PIR" id="A64251">
    <property type="entry name" value="A64251"/>
</dbReference>
<dbReference type="RefSeq" id="WP_009885570.1">
    <property type="nucleotide sequence ID" value="NC_000908.2"/>
</dbReference>
<dbReference type="SMR" id="P47700"/>
<dbReference type="FunCoup" id="P47700">
    <property type="interactions" value="203"/>
</dbReference>
<dbReference type="STRING" id="243273.MG_462"/>
<dbReference type="GeneID" id="88282643"/>
<dbReference type="KEGG" id="mge:MG_462"/>
<dbReference type="eggNOG" id="COG0008">
    <property type="taxonomic scope" value="Bacteria"/>
</dbReference>
<dbReference type="HOGENOM" id="CLU_015768_6_1_14"/>
<dbReference type="InParanoid" id="P47700"/>
<dbReference type="OrthoDB" id="9807503at2"/>
<dbReference type="BioCyc" id="MGEN243273:G1GJ2-556-MONOMER"/>
<dbReference type="Proteomes" id="UP000000807">
    <property type="component" value="Chromosome"/>
</dbReference>
<dbReference type="GO" id="GO:0005829">
    <property type="term" value="C:cytosol"/>
    <property type="evidence" value="ECO:0000318"/>
    <property type="project" value="GO_Central"/>
</dbReference>
<dbReference type="GO" id="GO:0005524">
    <property type="term" value="F:ATP binding"/>
    <property type="evidence" value="ECO:0007669"/>
    <property type="project" value="UniProtKB-UniRule"/>
</dbReference>
<dbReference type="GO" id="GO:0004818">
    <property type="term" value="F:glutamate-tRNA ligase activity"/>
    <property type="evidence" value="ECO:0000318"/>
    <property type="project" value="GO_Central"/>
</dbReference>
<dbReference type="GO" id="GO:0000049">
    <property type="term" value="F:tRNA binding"/>
    <property type="evidence" value="ECO:0007669"/>
    <property type="project" value="InterPro"/>
</dbReference>
<dbReference type="GO" id="GO:0008270">
    <property type="term" value="F:zinc ion binding"/>
    <property type="evidence" value="ECO:0007669"/>
    <property type="project" value="InterPro"/>
</dbReference>
<dbReference type="GO" id="GO:0006424">
    <property type="term" value="P:glutamyl-tRNA aminoacylation"/>
    <property type="evidence" value="ECO:0000318"/>
    <property type="project" value="GO_Central"/>
</dbReference>
<dbReference type="CDD" id="cd00808">
    <property type="entry name" value="GluRS_core"/>
    <property type="match status" value="1"/>
</dbReference>
<dbReference type="FunFam" id="1.10.10.350:FF:000002">
    <property type="entry name" value="Glutamate--tRNA ligase"/>
    <property type="match status" value="1"/>
</dbReference>
<dbReference type="FunFam" id="3.40.50.620:FF:000127">
    <property type="entry name" value="Glutamate--tRNA ligase"/>
    <property type="match status" value="1"/>
</dbReference>
<dbReference type="Gene3D" id="1.10.10.350">
    <property type="match status" value="1"/>
</dbReference>
<dbReference type="Gene3D" id="3.40.50.620">
    <property type="entry name" value="HUPs"/>
    <property type="match status" value="1"/>
</dbReference>
<dbReference type="HAMAP" id="MF_00022">
    <property type="entry name" value="Glu_tRNA_synth_type1"/>
    <property type="match status" value="1"/>
</dbReference>
<dbReference type="InterPro" id="IPR045462">
    <property type="entry name" value="aa-tRNA-synth_I_cd-bd"/>
</dbReference>
<dbReference type="InterPro" id="IPR020751">
    <property type="entry name" value="aa-tRNA-synth_I_codon-bd_sub2"/>
</dbReference>
<dbReference type="InterPro" id="IPR001412">
    <property type="entry name" value="aa-tRNA-synth_I_CS"/>
</dbReference>
<dbReference type="InterPro" id="IPR008925">
    <property type="entry name" value="aa_tRNA-synth_I_cd-bd_sf"/>
</dbReference>
<dbReference type="InterPro" id="IPR004527">
    <property type="entry name" value="Glu-tRNA-ligase_bac/mito"/>
</dbReference>
<dbReference type="InterPro" id="IPR000924">
    <property type="entry name" value="Glu/Gln-tRNA-synth"/>
</dbReference>
<dbReference type="InterPro" id="IPR020058">
    <property type="entry name" value="Glu/Gln-tRNA-synth_Ib_cat-dom"/>
</dbReference>
<dbReference type="InterPro" id="IPR049940">
    <property type="entry name" value="GluQ/Sye"/>
</dbReference>
<dbReference type="InterPro" id="IPR033910">
    <property type="entry name" value="GluRS_core"/>
</dbReference>
<dbReference type="InterPro" id="IPR014729">
    <property type="entry name" value="Rossmann-like_a/b/a_fold"/>
</dbReference>
<dbReference type="NCBIfam" id="TIGR00464">
    <property type="entry name" value="gltX_bact"/>
    <property type="match status" value="1"/>
</dbReference>
<dbReference type="PANTHER" id="PTHR43311">
    <property type="entry name" value="GLUTAMATE--TRNA LIGASE"/>
    <property type="match status" value="1"/>
</dbReference>
<dbReference type="PANTHER" id="PTHR43311:SF2">
    <property type="entry name" value="GLUTAMATE--TRNA LIGASE, MITOCHONDRIAL-RELATED"/>
    <property type="match status" value="1"/>
</dbReference>
<dbReference type="Pfam" id="PF19269">
    <property type="entry name" value="Anticodon_2"/>
    <property type="match status" value="1"/>
</dbReference>
<dbReference type="Pfam" id="PF00749">
    <property type="entry name" value="tRNA-synt_1c"/>
    <property type="match status" value="1"/>
</dbReference>
<dbReference type="PRINTS" id="PR00987">
    <property type="entry name" value="TRNASYNTHGLU"/>
</dbReference>
<dbReference type="SUPFAM" id="SSF48163">
    <property type="entry name" value="An anticodon-binding domain of class I aminoacyl-tRNA synthetases"/>
    <property type="match status" value="1"/>
</dbReference>
<dbReference type="SUPFAM" id="SSF52374">
    <property type="entry name" value="Nucleotidylyl transferase"/>
    <property type="match status" value="1"/>
</dbReference>
<dbReference type="PROSITE" id="PS00178">
    <property type="entry name" value="AA_TRNA_LIGASE_I"/>
    <property type="match status" value="1"/>
</dbReference>
<name>SYE_MYCGE</name>
<feature type="chain" id="PRO_0000119601" description="Glutamate--tRNA ligase">
    <location>
        <begin position="1"/>
        <end position="484"/>
    </location>
</feature>
<feature type="short sequence motif" description="'HIGH' region" evidence="1">
    <location>
        <begin position="10"/>
        <end position="20"/>
    </location>
</feature>
<feature type="short sequence motif" description="'KMSKS' region" evidence="1">
    <location>
        <begin position="252"/>
        <end position="256"/>
    </location>
</feature>
<feature type="binding site" evidence="1">
    <location>
        <position position="255"/>
    </location>
    <ligand>
        <name>ATP</name>
        <dbReference type="ChEBI" id="CHEBI:30616"/>
    </ligand>
</feature>
<feature type="sequence conflict" description="In Ref. 3; AAD12469." evidence="2" ref="3">
    <original>D</original>
    <variation>EL</variation>
    <location>
        <position position="60"/>
    </location>
</feature>
<feature type="sequence conflict" description="In Ref. 2." evidence="2" ref="2">
    <original>A</original>
    <variation>V</variation>
    <location>
        <position position="230"/>
    </location>
</feature>
<feature type="sequence conflict" description="In Ref. 3." evidence="2" ref="3">
    <original>L</original>
    <variation>T</variation>
    <location>
        <position position="362"/>
    </location>
</feature>
<evidence type="ECO:0000255" key="1">
    <source>
        <dbReference type="HAMAP-Rule" id="MF_00022"/>
    </source>
</evidence>
<evidence type="ECO:0000305" key="2"/>